<comment type="subcellular location">
    <subcellularLocation>
        <location>Plastid</location>
        <location>Chloroplast</location>
    </subcellularLocation>
</comment>
<comment type="similarity">
    <text evidence="2">Belongs to the universal ribosomal protein uS9 family.</text>
</comment>
<gene>
    <name type="primary">rps9</name>
</gene>
<protein>
    <recommendedName>
        <fullName evidence="2">Small ribosomal subunit protein uS9c</fullName>
    </recommendedName>
    <alternativeName>
        <fullName>30S ribosomal protein S9, chloroplastic</fullName>
    </alternativeName>
</protein>
<organism>
    <name type="scientific">Pyropia yezoensis</name>
    <name type="common">Susabi-nori</name>
    <name type="synonym">Porphyra yezoensis</name>
    <dbReference type="NCBI Taxonomy" id="2788"/>
    <lineage>
        <taxon>Eukaryota</taxon>
        <taxon>Rhodophyta</taxon>
        <taxon>Bangiophyceae</taxon>
        <taxon>Bangiales</taxon>
        <taxon>Bangiaceae</taxon>
        <taxon>Pyropia</taxon>
    </lineage>
</organism>
<dbReference type="EMBL" id="DQ995193">
    <property type="protein sequence ID" value="ABJ91308.1"/>
    <property type="molecule type" value="Genomic_DNA"/>
</dbReference>
<dbReference type="EMBL" id="AP006715">
    <property type="protein sequence ID" value="BAE92414.1"/>
    <property type="molecule type" value="Genomic_DNA"/>
</dbReference>
<dbReference type="RefSeq" id="YP_536971.1">
    <property type="nucleotide sequence ID" value="NC_007932.1"/>
</dbReference>
<dbReference type="SMR" id="Q1XDJ7"/>
<dbReference type="GeneID" id="3978856"/>
<dbReference type="GO" id="GO:0009507">
    <property type="term" value="C:chloroplast"/>
    <property type="evidence" value="ECO:0007669"/>
    <property type="project" value="UniProtKB-SubCell"/>
</dbReference>
<dbReference type="GO" id="GO:0022627">
    <property type="term" value="C:cytosolic small ribosomal subunit"/>
    <property type="evidence" value="ECO:0007669"/>
    <property type="project" value="TreeGrafter"/>
</dbReference>
<dbReference type="GO" id="GO:0003723">
    <property type="term" value="F:RNA binding"/>
    <property type="evidence" value="ECO:0007669"/>
    <property type="project" value="TreeGrafter"/>
</dbReference>
<dbReference type="GO" id="GO:0003735">
    <property type="term" value="F:structural constituent of ribosome"/>
    <property type="evidence" value="ECO:0007669"/>
    <property type="project" value="InterPro"/>
</dbReference>
<dbReference type="GO" id="GO:0006412">
    <property type="term" value="P:translation"/>
    <property type="evidence" value="ECO:0007669"/>
    <property type="project" value="UniProtKB-UniRule"/>
</dbReference>
<dbReference type="FunFam" id="3.30.230.10:FF:000001">
    <property type="entry name" value="30S ribosomal protein S9"/>
    <property type="match status" value="1"/>
</dbReference>
<dbReference type="Gene3D" id="3.30.230.10">
    <property type="match status" value="1"/>
</dbReference>
<dbReference type="HAMAP" id="MF_00532_B">
    <property type="entry name" value="Ribosomal_uS9_B"/>
    <property type="match status" value="1"/>
</dbReference>
<dbReference type="InterPro" id="IPR020568">
    <property type="entry name" value="Ribosomal_Su5_D2-typ_SF"/>
</dbReference>
<dbReference type="InterPro" id="IPR000754">
    <property type="entry name" value="Ribosomal_uS9"/>
</dbReference>
<dbReference type="InterPro" id="IPR023035">
    <property type="entry name" value="Ribosomal_uS9_bac/plastid"/>
</dbReference>
<dbReference type="InterPro" id="IPR020574">
    <property type="entry name" value="Ribosomal_uS9_CS"/>
</dbReference>
<dbReference type="InterPro" id="IPR014721">
    <property type="entry name" value="Ribsml_uS5_D2-typ_fold_subgr"/>
</dbReference>
<dbReference type="NCBIfam" id="NF001099">
    <property type="entry name" value="PRK00132.1"/>
    <property type="match status" value="1"/>
</dbReference>
<dbReference type="PANTHER" id="PTHR21569">
    <property type="entry name" value="RIBOSOMAL PROTEIN S9"/>
    <property type="match status" value="1"/>
</dbReference>
<dbReference type="PANTHER" id="PTHR21569:SF1">
    <property type="entry name" value="SMALL RIBOSOMAL SUBUNIT PROTEIN US9M"/>
    <property type="match status" value="1"/>
</dbReference>
<dbReference type="Pfam" id="PF00380">
    <property type="entry name" value="Ribosomal_S9"/>
    <property type="match status" value="1"/>
</dbReference>
<dbReference type="SUPFAM" id="SSF54211">
    <property type="entry name" value="Ribosomal protein S5 domain 2-like"/>
    <property type="match status" value="1"/>
</dbReference>
<dbReference type="PROSITE" id="PS00360">
    <property type="entry name" value="RIBOSOMAL_S9"/>
    <property type="match status" value="1"/>
</dbReference>
<geneLocation type="chloroplast"/>
<accession>Q1XDJ7</accession>
<feature type="chain" id="PRO_0000277078" description="Small ribosomal subunit protein uS9c">
    <location>
        <begin position="1"/>
        <end position="137"/>
    </location>
</feature>
<feature type="region of interest" description="Disordered" evidence="1">
    <location>
        <begin position="106"/>
        <end position="137"/>
    </location>
</feature>
<feature type="compositionally biased region" description="Basic residues" evidence="1">
    <location>
        <begin position="118"/>
        <end position="137"/>
    </location>
</feature>
<evidence type="ECO:0000256" key="1">
    <source>
        <dbReference type="SAM" id="MobiDB-lite"/>
    </source>
</evidence>
<evidence type="ECO:0000305" key="2"/>
<reference key="1">
    <citation type="submission" date="2006-09" db="EMBL/GenBank/DDBJ databases">
        <title>Cloning and analysis of the Porphyra yezoensis gene for rps9.</title>
        <authorList>
            <person name="Wang M.Q."/>
            <person name="Mao Y.X."/>
        </authorList>
    </citation>
    <scope>NUCLEOTIDE SEQUENCE [GENOMIC DNA]</scope>
    <source>
        <strain>Qingdao</strain>
    </source>
</reference>
<reference key="2">
    <citation type="submission" date="2003-11" db="EMBL/GenBank/DDBJ databases">
        <title>Whole genome sequence of Porphyra yezoensis chloroplast.</title>
        <authorList>
            <person name="Kunimoto M."/>
            <person name="Morishima K."/>
            <person name="Yoshikawa M."/>
            <person name="Fukuda S."/>
            <person name="Kobayashi T."/>
            <person name="Kobayashi M."/>
            <person name="Okazaki T."/>
            <person name="Ohara I."/>
            <person name="Nakayama I."/>
        </authorList>
    </citation>
    <scope>NUCLEOTIDE SEQUENCE [LARGE SCALE GENOMIC DNA]</scope>
    <source>
        <strain>U-51</strain>
    </source>
</reference>
<name>RR9_PYRYE</name>
<proteinExistence type="inferred from homology"/>
<keyword id="KW-0150">Chloroplast</keyword>
<keyword id="KW-0934">Plastid</keyword>
<keyword id="KW-0687">Ribonucleoprotein</keyword>
<keyword id="KW-0689">Ribosomal protein</keyword>
<sequence>MSTELIKTRAIYSGTGRRKCSVAQVRLVPGSGNLIINGIPGESYLQFSPNYLRVSYAPLQVLGLLNQYDIHVNARGGGLTGQADAIRLGVARALCSINPENRTTLKSEGYLTRDPRVKERKKYGLKKARKAPQFSKR</sequence>